<sequence length="308" mass="33912">MADSVMMGSGSLNSGSRSGSSKTCTSPTENYQLARRRTLQVVVSALLTECGFDSAEKAVVETLTEMMQSYITEVGRCAKANCEHTARSTPTLSDVVITLVEMGFNVDTLPVYAKRSQRMVITAPPITNAPVVPKSLTAGQKRTHPAHIPSHFPDFPDPHTYIRTPTFREPVSDYQVVREKAASQRRDVERALTRFMAKTGETQSLFKDDISAFPLIAAKPSPIPYLSALLPSELELQSLEETDSSEQDDQMDNDNNTSHIMQDDSGADKENEVLPPGGVVPSGKANEENMIDNPYLRPVKKPKVRRKK</sequence>
<protein>
    <recommendedName>
        <fullName>Transcription initiation factor TFIID subunit 8</fullName>
    </recommendedName>
    <alternativeName>
        <fullName>Protein taube nuss-like</fullName>
    </alternativeName>
    <alternativeName>
        <fullName>TBP-associated factor 8</fullName>
    </alternativeName>
</protein>
<keyword id="KW-0025">Alternative splicing</keyword>
<keyword id="KW-0963">Cytoplasm</keyword>
<keyword id="KW-0217">Developmental protein</keyword>
<keyword id="KW-0221">Differentiation</keyword>
<keyword id="KW-0539">Nucleus</keyword>
<keyword id="KW-0597">Phosphoprotein</keyword>
<keyword id="KW-1185">Reference proteome</keyword>
<keyword id="KW-0804">Transcription</keyword>
<keyword id="KW-0805">Transcription regulation</keyword>
<feature type="chain" id="PRO_0000315400" description="Transcription initiation factor TFIID subunit 8">
    <location>
        <begin position="1"/>
        <end position="308"/>
    </location>
</feature>
<feature type="domain" description="Histone-fold">
    <location>
        <begin position="37"/>
        <end position="104"/>
    </location>
</feature>
<feature type="region of interest" description="Disordered" evidence="4">
    <location>
        <begin position="1"/>
        <end position="29"/>
    </location>
</feature>
<feature type="region of interest" description="Disordered" evidence="4">
    <location>
        <begin position="239"/>
        <end position="308"/>
    </location>
</feature>
<feature type="short sequence motif" description="Nuclear localization signal" evidence="3">
    <location>
        <begin position="295"/>
        <end position="308"/>
    </location>
</feature>
<feature type="compositionally biased region" description="Low complexity" evidence="4">
    <location>
        <begin position="8"/>
        <end position="21"/>
    </location>
</feature>
<feature type="compositionally biased region" description="Acidic residues" evidence="4">
    <location>
        <begin position="239"/>
        <end position="252"/>
    </location>
</feature>
<feature type="compositionally biased region" description="Basic residues" evidence="4">
    <location>
        <begin position="298"/>
        <end position="308"/>
    </location>
</feature>
<feature type="modified residue" description="Phosphoserine" evidence="5">
    <location>
        <position position="26"/>
    </location>
</feature>
<feature type="splice variant" id="VSP_030556" description="In isoform 2." evidence="6">
    <location>
        <begin position="210"/>
        <end position="249"/>
    </location>
</feature>
<name>TAF8_DANRE</name>
<organism>
    <name type="scientific">Danio rerio</name>
    <name type="common">Zebrafish</name>
    <name type="synonym">Brachydanio rerio</name>
    <dbReference type="NCBI Taxonomy" id="7955"/>
    <lineage>
        <taxon>Eukaryota</taxon>
        <taxon>Metazoa</taxon>
        <taxon>Chordata</taxon>
        <taxon>Craniata</taxon>
        <taxon>Vertebrata</taxon>
        <taxon>Euteleostomi</taxon>
        <taxon>Actinopterygii</taxon>
        <taxon>Neopterygii</taxon>
        <taxon>Teleostei</taxon>
        <taxon>Ostariophysi</taxon>
        <taxon>Cypriniformes</taxon>
        <taxon>Danionidae</taxon>
        <taxon>Danioninae</taxon>
        <taxon>Danio</taxon>
    </lineage>
</organism>
<evidence type="ECO:0000250" key="1"/>
<evidence type="ECO:0000250" key="2">
    <source>
        <dbReference type="UniProtKB" id="Q7Z7C8"/>
    </source>
</evidence>
<evidence type="ECO:0000255" key="3"/>
<evidence type="ECO:0000256" key="4">
    <source>
        <dbReference type="SAM" id="MobiDB-lite"/>
    </source>
</evidence>
<evidence type="ECO:0000269" key="5">
    <source>
    </source>
</evidence>
<evidence type="ECO:0000303" key="6">
    <source ref="1"/>
</evidence>
<evidence type="ECO:0000305" key="7"/>
<proteinExistence type="evidence at protein level"/>
<dbReference type="EMBL" id="BC049422">
    <property type="protein sequence ID" value="AAH49422.1"/>
    <property type="molecule type" value="mRNA"/>
</dbReference>
<dbReference type="EMBL" id="BC065457">
    <property type="protein sequence ID" value="AAH65457.1"/>
    <property type="molecule type" value="mRNA"/>
</dbReference>
<dbReference type="RefSeq" id="NP_956580.1">
    <molecule id="Q6P0T2-2"/>
    <property type="nucleotide sequence ID" value="NM_200286.1"/>
</dbReference>
<dbReference type="RefSeq" id="XP_005162360.1">
    <molecule id="Q6P0T2-1"/>
    <property type="nucleotide sequence ID" value="XM_005162303.5"/>
</dbReference>
<dbReference type="SMR" id="Q6P0T2"/>
<dbReference type="FunCoup" id="Q6P0T2">
    <property type="interactions" value="1617"/>
</dbReference>
<dbReference type="STRING" id="7955.ENSDARP00000032165"/>
<dbReference type="iPTMnet" id="Q6P0T2"/>
<dbReference type="PaxDb" id="7955-ENSDARP00000032165"/>
<dbReference type="Ensembl" id="ENSDART00000039498">
    <molecule id="Q6P0T2-1"/>
    <property type="protein sequence ID" value="ENSDARP00000032165"/>
    <property type="gene ID" value="ENSDARG00000026806"/>
</dbReference>
<dbReference type="Ensembl" id="ENSDART00000157514">
    <molecule id="Q6P0T2-1"/>
    <property type="protein sequence ID" value="ENSDARP00000131962"/>
    <property type="gene ID" value="ENSDARG00000026806"/>
</dbReference>
<dbReference type="Ensembl" id="ENSDART00000164220">
    <molecule id="Q6P0T2-1"/>
    <property type="protein sequence ID" value="ENSDARP00000133427"/>
    <property type="gene ID" value="ENSDARG00000026806"/>
</dbReference>
<dbReference type="Ensembl" id="ENSDART00000179137">
    <molecule id="Q6P0T2-1"/>
    <property type="protein sequence ID" value="ENSDARP00000144389"/>
    <property type="gene ID" value="ENSDARG00000114197"/>
</dbReference>
<dbReference type="GeneID" id="393256"/>
<dbReference type="KEGG" id="dre:393256"/>
<dbReference type="AGR" id="ZFIN:ZDB-GENE-040426-1013"/>
<dbReference type="CTD" id="129685"/>
<dbReference type="ZFIN" id="ZDB-GENE-040426-1013">
    <property type="gene designation" value="taf8"/>
</dbReference>
<dbReference type="eggNOG" id="KOG4336">
    <property type="taxonomic scope" value="Eukaryota"/>
</dbReference>
<dbReference type="HOGENOM" id="CLU_070829_0_0_1"/>
<dbReference type="InParanoid" id="Q6P0T2"/>
<dbReference type="OMA" id="HVIQAPQ"/>
<dbReference type="OrthoDB" id="2193813at2759"/>
<dbReference type="PhylomeDB" id="Q6P0T2"/>
<dbReference type="TreeFam" id="TF316311"/>
<dbReference type="Reactome" id="R-DRE-6807505">
    <property type="pathway name" value="RNA polymerase II transcribes snRNA genes"/>
</dbReference>
<dbReference type="PRO" id="PR:Q6P0T2"/>
<dbReference type="Proteomes" id="UP000000437">
    <property type="component" value="Alternate scaffold 23"/>
</dbReference>
<dbReference type="Proteomes" id="UP000000437">
    <property type="component" value="Chromosome 23"/>
</dbReference>
<dbReference type="Bgee" id="ENSDARG00000026806">
    <property type="expression patterns" value="Expressed in testis and 22 other cell types or tissues"/>
</dbReference>
<dbReference type="ExpressionAtlas" id="Q6P0T2">
    <property type="expression patterns" value="baseline"/>
</dbReference>
<dbReference type="GO" id="GO:0005737">
    <property type="term" value="C:cytoplasm"/>
    <property type="evidence" value="ECO:0007669"/>
    <property type="project" value="UniProtKB-SubCell"/>
</dbReference>
<dbReference type="GO" id="GO:0005669">
    <property type="term" value="C:transcription factor TFIID complex"/>
    <property type="evidence" value="ECO:0000250"/>
    <property type="project" value="UniProtKB"/>
</dbReference>
<dbReference type="GO" id="GO:0046982">
    <property type="term" value="F:protein heterodimerization activity"/>
    <property type="evidence" value="ECO:0007669"/>
    <property type="project" value="InterPro"/>
</dbReference>
<dbReference type="GO" id="GO:0030154">
    <property type="term" value="P:cell differentiation"/>
    <property type="evidence" value="ECO:0007669"/>
    <property type="project" value="UniProtKB-KW"/>
</dbReference>
<dbReference type="GO" id="GO:0006367">
    <property type="term" value="P:transcription initiation at RNA polymerase II promoter"/>
    <property type="evidence" value="ECO:0000318"/>
    <property type="project" value="GO_Central"/>
</dbReference>
<dbReference type="CDD" id="cd22918">
    <property type="entry name" value="HFD_TAF8"/>
    <property type="match status" value="1"/>
</dbReference>
<dbReference type="CDD" id="cd08049">
    <property type="entry name" value="TAF8"/>
    <property type="match status" value="1"/>
</dbReference>
<dbReference type="Gene3D" id="1.10.20.10">
    <property type="entry name" value="Histone, subunit A"/>
    <property type="match status" value="1"/>
</dbReference>
<dbReference type="InterPro" id="IPR006565">
    <property type="entry name" value="BTP"/>
</dbReference>
<dbReference type="InterPro" id="IPR009072">
    <property type="entry name" value="Histone-fold"/>
</dbReference>
<dbReference type="InterPro" id="IPR037818">
    <property type="entry name" value="TAF8"/>
</dbReference>
<dbReference type="InterPro" id="IPR019473">
    <property type="entry name" value="TFIID_su8_C"/>
</dbReference>
<dbReference type="PANTHER" id="PTHR46469">
    <property type="entry name" value="TRANSCRIPTION INITIATION FACTOR TFIID SUBUNIT 8"/>
    <property type="match status" value="1"/>
</dbReference>
<dbReference type="PANTHER" id="PTHR46469:SF1">
    <property type="entry name" value="TRANSCRIPTION INITIATION FACTOR TFIID SUBUNIT 8"/>
    <property type="match status" value="1"/>
</dbReference>
<dbReference type="Pfam" id="PF07524">
    <property type="entry name" value="Bromo_TP"/>
    <property type="match status" value="1"/>
</dbReference>
<dbReference type="Pfam" id="PF10406">
    <property type="entry name" value="TAF8_C"/>
    <property type="match status" value="1"/>
</dbReference>
<dbReference type="SMART" id="SM00576">
    <property type="entry name" value="BTP"/>
    <property type="match status" value="1"/>
</dbReference>
<dbReference type="SUPFAM" id="SSF47113">
    <property type="entry name" value="Histone-fold"/>
    <property type="match status" value="1"/>
</dbReference>
<reference key="1">
    <citation type="submission" date="2004-01" db="EMBL/GenBank/DDBJ databases">
        <authorList>
            <consortium name="NIH - Zebrafish Gene Collection (ZGC) project"/>
        </authorList>
    </citation>
    <scope>NUCLEOTIDE SEQUENCE [LARGE SCALE MRNA] (ISOFORMS 1 AND 2)</scope>
    <source>
        <strain>SJD</strain>
        <tissue>Embryo</tissue>
    </source>
</reference>
<reference key="2">
    <citation type="journal article" date="2008" name="J. Proteome Res.">
        <title>Online automated in vivo zebrafish phosphoproteomics: from large-scale analysis down to a single embryo.</title>
        <authorList>
            <person name="Lemeer S."/>
            <person name="Pinkse M.W.H."/>
            <person name="Mohammed S."/>
            <person name="van Breukelen B."/>
            <person name="den Hertog J."/>
            <person name="Slijper M."/>
            <person name="Heck A.J.R."/>
        </authorList>
    </citation>
    <scope>PHOSPHORYLATION [LARGE SCALE ANALYSIS] AT SER-26</scope>
    <scope>IDENTIFICATION BY MASS SPECTROMETRY</scope>
    <source>
        <tissue>Embryo</tissue>
    </source>
</reference>
<gene>
    <name type="primary">taf8</name>
    <name type="synonym">tbnl</name>
</gene>
<comment type="function">
    <text evidence="2">The TFIID basal transcription factor complex plays a major role in the initiation of RNA polymerase II (Pol II)-dependent transcription. TFIID recognizes and binds promoters with or without a TATA box via its subunit tbp, a TATA-box-binding protein, and promotes assembly of the pre-initiation complex (PIC). The TFIID complex consists of tbp and TBP-associated factors (TAFs). Mediates both basal and activator-dependent transcription.</text>
</comment>
<comment type="subunit">
    <text evidence="2">Component of the TFIID basal transcription factor complex, composed of TATA-box-binding protein tbp, and a number of TBP-associated factors (TAFs).</text>
</comment>
<comment type="subcellular location">
    <subcellularLocation>
        <location evidence="1">Nucleus</location>
    </subcellularLocation>
    <subcellularLocation>
        <location evidence="1">Cytoplasm</location>
    </subcellularLocation>
</comment>
<comment type="alternative products">
    <event type="alternative splicing"/>
    <isoform>
        <id>Q6P0T2-1</id>
        <name>1</name>
        <sequence type="displayed"/>
    </isoform>
    <isoform>
        <id>Q6P0T2-2</id>
        <name>2</name>
        <sequence type="described" ref="VSP_030556"/>
    </isoform>
</comment>
<comment type="similarity">
    <text evidence="7">Belongs to the TAF8 family.</text>
</comment>
<accession>Q6P0T2</accession>
<accession>Q7ZWG5</accession>